<evidence type="ECO:0000255" key="1">
    <source>
        <dbReference type="PROSITE-ProRule" id="PRU00238"/>
    </source>
</evidence>
<organism>
    <name type="scientific">Chironomus thummi thummi</name>
    <name type="common">Midge</name>
    <dbReference type="NCBI Taxonomy" id="7155"/>
    <lineage>
        <taxon>Eukaryota</taxon>
        <taxon>Metazoa</taxon>
        <taxon>Ecdysozoa</taxon>
        <taxon>Arthropoda</taxon>
        <taxon>Hexapoda</taxon>
        <taxon>Insecta</taxon>
        <taxon>Pterygota</taxon>
        <taxon>Neoptera</taxon>
        <taxon>Endopterygota</taxon>
        <taxon>Diptera</taxon>
        <taxon>Nematocera</taxon>
        <taxon>Chironomoidea</taxon>
        <taxon>Chironomidae</taxon>
        <taxon>Chironominae</taxon>
        <taxon>Chironomus</taxon>
    </lineage>
</organism>
<sequence>VATPAMPSMTDAQVAAVKGDWEKIKGSGVEILYFFLNKFPGNFPMFKKLGNDLAAAKGTAEFKDQADKIIAFLQGVIEKLGSDMGGAKALLNQLGTSHKAMGITKDQFDQFRQALTELLGNLGFGGNIGAWNATVDLMFHVIFNALDGTPV</sequence>
<feature type="chain" id="PRO_0000052468" description="Globin CTT-IIIA">
    <location>
        <begin position="1"/>
        <end position="151"/>
    </location>
</feature>
<feature type="domain" description="Globin" evidence="1">
    <location>
        <begin position="8"/>
        <end position="147"/>
    </location>
</feature>
<feature type="binding site" description="proximal binding residue" evidence="1">
    <location>
        <position position="98"/>
    </location>
    <ligand>
        <name>heme b</name>
        <dbReference type="ChEBI" id="CHEBI:60344"/>
    </ligand>
    <ligandPart>
        <name>Fe</name>
        <dbReference type="ChEBI" id="CHEBI:18248"/>
    </ligandPart>
</feature>
<protein>
    <recommendedName>
        <fullName>Globin CTT-IIIA</fullName>
    </recommendedName>
</protein>
<proteinExistence type="evidence at protein level"/>
<keyword id="KW-0903">Direct protein sequencing</keyword>
<keyword id="KW-0349">Heme</keyword>
<keyword id="KW-0408">Iron</keyword>
<keyword id="KW-0479">Metal-binding</keyword>
<keyword id="KW-0561">Oxygen transport</keyword>
<keyword id="KW-0813">Transport</keyword>
<accession>P02231</accession>
<reference key="1">
    <citation type="journal article" date="1981" name="Hoppe-Seyler's Z. Physiol. Chem.">
        <title>Hemoglobins, XXXVII. The primary structure of a monomeric insect hemoglobin (Erythrocruorin), component CTT IIIa of Chironomus thummi thummi. An anomalous Heme complex: E7 Gln, E11 Ile.</title>
        <authorList>
            <person name="Steer W."/>
            <person name="Braunitzer G."/>
        </authorList>
    </citation>
    <scope>PROTEIN SEQUENCE</scope>
</reference>
<dbReference type="PIR" id="A02553">
    <property type="entry name" value="GGICEA"/>
</dbReference>
<dbReference type="SMR" id="P02231"/>
<dbReference type="Allergome" id="208">
    <property type="allergen name" value="Chi t 4"/>
</dbReference>
<dbReference type="Allergome" id="3193">
    <property type="allergen name" value="Chi t 4.0101"/>
</dbReference>
<dbReference type="GO" id="GO:0005576">
    <property type="term" value="C:extracellular region"/>
    <property type="evidence" value="ECO:0007669"/>
    <property type="project" value="InterPro"/>
</dbReference>
<dbReference type="GO" id="GO:0005833">
    <property type="term" value="C:hemoglobin complex"/>
    <property type="evidence" value="ECO:0007669"/>
    <property type="project" value="InterPro"/>
</dbReference>
<dbReference type="GO" id="GO:0020037">
    <property type="term" value="F:heme binding"/>
    <property type="evidence" value="ECO:0007669"/>
    <property type="project" value="InterPro"/>
</dbReference>
<dbReference type="GO" id="GO:0046872">
    <property type="term" value="F:metal ion binding"/>
    <property type="evidence" value="ECO:0007669"/>
    <property type="project" value="UniProtKB-KW"/>
</dbReference>
<dbReference type="GO" id="GO:0019825">
    <property type="term" value="F:oxygen binding"/>
    <property type="evidence" value="ECO:0007669"/>
    <property type="project" value="InterPro"/>
</dbReference>
<dbReference type="GO" id="GO:0005344">
    <property type="term" value="F:oxygen carrier activity"/>
    <property type="evidence" value="ECO:0007669"/>
    <property type="project" value="UniProtKB-KW"/>
</dbReference>
<dbReference type="CDD" id="cd01040">
    <property type="entry name" value="Mb-like"/>
    <property type="match status" value="1"/>
</dbReference>
<dbReference type="Gene3D" id="1.10.490.10">
    <property type="entry name" value="Globins"/>
    <property type="match status" value="1"/>
</dbReference>
<dbReference type="InterPro" id="IPR002336">
    <property type="entry name" value="Erythrocruorin"/>
</dbReference>
<dbReference type="InterPro" id="IPR000971">
    <property type="entry name" value="Globin"/>
</dbReference>
<dbReference type="InterPro" id="IPR009050">
    <property type="entry name" value="Globin-like_sf"/>
</dbReference>
<dbReference type="InterPro" id="IPR012292">
    <property type="entry name" value="Globin/Proto"/>
</dbReference>
<dbReference type="InterPro" id="IPR044399">
    <property type="entry name" value="Mb-like_M"/>
</dbReference>
<dbReference type="Pfam" id="PF00042">
    <property type="entry name" value="Globin"/>
    <property type="match status" value="1"/>
</dbReference>
<dbReference type="PRINTS" id="PR00611">
    <property type="entry name" value="ERYTHCRUORIN"/>
</dbReference>
<dbReference type="SUPFAM" id="SSF46458">
    <property type="entry name" value="Globin-like"/>
    <property type="match status" value="1"/>
</dbReference>
<dbReference type="PROSITE" id="PS01033">
    <property type="entry name" value="GLOBIN"/>
    <property type="match status" value="1"/>
</dbReference>
<name>GLBT_CHITH</name>
<comment type="subunit">
    <text>Monomer.</text>
</comment>
<comment type="miscellaneous">
    <text>There are at least 12 different components in Midge globin.</text>
</comment>
<comment type="similarity">
    <text evidence="1">Belongs to the globin family.</text>
</comment>